<evidence type="ECO:0000250" key="1">
    <source>
        <dbReference type="UniProtKB" id="P09440"/>
    </source>
</evidence>
<evidence type="ECO:0000250" key="2">
    <source>
        <dbReference type="UniProtKB" id="P11586"/>
    </source>
</evidence>
<evidence type="ECO:0000255" key="3"/>
<evidence type="ECO:0000269" key="4">
    <source>
    </source>
</evidence>
<evidence type="ECO:0000305" key="5"/>
<dbReference type="EC" id="1.5.1.5"/>
<dbReference type="EC" id="3.5.4.9"/>
<dbReference type="EC" id="6.3.4.3"/>
<dbReference type="EMBL" id="CU329671">
    <property type="protein sequence ID" value="CAA17888.3"/>
    <property type="molecule type" value="Genomic_DNA"/>
</dbReference>
<dbReference type="PIR" id="T40147">
    <property type="entry name" value="T40147"/>
</dbReference>
<dbReference type="RefSeq" id="NP_596437.2">
    <property type="nucleotide sequence ID" value="NM_001022356.2"/>
</dbReference>
<dbReference type="SMR" id="O43007"/>
<dbReference type="BioGRID" id="276831">
    <property type="interactions" value="4"/>
</dbReference>
<dbReference type="FunCoup" id="O43007">
    <property type="interactions" value="541"/>
</dbReference>
<dbReference type="STRING" id="284812.O43007"/>
<dbReference type="PaxDb" id="4896-SPBC2G2.08.1"/>
<dbReference type="EnsemblFungi" id="SPBC2G2.08.1">
    <property type="protein sequence ID" value="SPBC2G2.08.1:pep"/>
    <property type="gene ID" value="SPBC2G2.08"/>
</dbReference>
<dbReference type="GeneID" id="2540300"/>
<dbReference type="KEGG" id="spo:2540300"/>
<dbReference type="PomBase" id="SPBC2G2.08">
    <property type="gene designation" value="ade9"/>
</dbReference>
<dbReference type="VEuPathDB" id="FungiDB:SPBC2G2.08"/>
<dbReference type="eggNOG" id="KOG4230">
    <property type="taxonomic scope" value="Eukaryota"/>
</dbReference>
<dbReference type="HOGENOM" id="CLU_003601_2_0_1"/>
<dbReference type="InParanoid" id="O43007"/>
<dbReference type="OMA" id="IKRVVDC"/>
<dbReference type="Reactome" id="R-SPO-196757">
    <property type="pathway name" value="Metabolism of folate and pterines"/>
</dbReference>
<dbReference type="UniPathway" id="UPA00193"/>
<dbReference type="PRO" id="PR:O43007"/>
<dbReference type="Proteomes" id="UP000002485">
    <property type="component" value="Chromosome II"/>
</dbReference>
<dbReference type="GO" id="GO:0005829">
    <property type="term" value="C:cytosol"/>
    <property type="evidence" value="ECO:0000318"/>
    <property type="project" value="GO_Central"/>
</dbReference>
<dbReference type="GO" id="GO:0005739">
    <property type="term" value="C:mitochondrion"/>
    <property type="evidence" value="ECO:0007005"/>
    <property type="project" value="PomBase"/>
</dbReference>
<dbReference type="GO" id="GO:0005524">
    <property type="term" value="F:ATP binding"/>
    <property type="evidence" value="ECO:0000255"/>
    <property type="project" value="PomBase"/>
</dbReference>
<dbReference type="GO" id="GO:0004329">
    <property type="term" value="F:formate-tetrahydrofolate ligase activity"/>
    <property type="evidence" value="ECO:0000250"/>
    <property type="project" value="PomBase"/>
</dbReference>
<dbReference type="GO" id="GO:0004477">
    <property type="term" value="F:methenyltetrahydrofolate cyclohydrolase activity"/>
    <property type="evidence" value="ECO:0000318"/>
    <property type="project" value="GO_Central"/>
</dbReference>
<dbReference type="GO" id="GO:0004488">
    <property type="term" value="F:methylenetetrahydrofolate dehydrogenase (NADP+) activity"/>
    <property type="evidence" value="ECO:0000318"/>
    <property type="project" value="GO_Central"/>
</dbReference>
<dbReference type="GO" id="GO:0009257">
    <property type="term" value="P:10-formyltetrahydrofolate biosynthetic process"/>
    <property type="evidence" value="ECO:0000250"/>
    <property type="project" value="PomBase"/>
</dbReference>
<dbReference type="GO" id="GO:0046656">
    <property type="term" value="P:folic acid biosynthetic process"/>
    <property type="evidence" value="ECO:0000266"/>
    <property type="project" value="PomBase"/>
</dbReference>
<dbReference type="GO" id="GO:0035999">
    <property type="term" value="P:tetrahydrofolate interconversion"/>
    <property type="evidence" value="ECO:0000318"/>
    <property type="project" value="GO_Central"/>
</dbReference>
<dbReference type="CDD" id="cd00477">
    <property type="entry name" value="FTHFS"/>
    <property type="match status" value="1"/>
</dbReference>
<dbReference type="CDD" id="cd01080">
    <property type="entry name" value="NAD_bind_m-THF_DH_Cyclohyd"/>
    <property type="match status" value="1"/>
</dbReference>
<dbReference type="FunFam" id="3.40.50.720:FF:000006">
    <property type="entry name" value="Bifunctional protein FolD"/>
    <property type="match status" value="1"/>
</dbReference>
<dbReference type="FunFam" id="3.40.50.300:FF:000245">
    <property type="entry name" value="C-1-tetrahydrofolate synthase, cytoplasmic"/>
    <property type="match status" value="1"/>
</dbReference>
<dbReference type="FunFam" id="3.40.50.10860:FF:000005">
    <property type="entry name" value="C-1-tetrahydrofolate synthase, cytoplasmic, putative"/>
    <property type="match status" value="1"/>
</dbReference>
<dbReference type="FunFam" id="3.40.50.300:FF:005573">
    <property type="entry name" value="C-1-tetrahydrofolate synthase, mitochondrial"/>
    <property type="match status" value="1"/>
</dbReference>
<dbReference type="FunFam" id="3.10.410.10:FF:000001">
    <property type="entry name" value="Putative formate--tetrahydrofolate ligase"/>
    <property type="match status" value="1"/>
</dbReference>
<dbReference type="Gene3D" id="3.10.410.10">
    <property type="entry name" value="Formyltetrahydrofolate synthetase, domain 3"/>
    <property type="match status" value="1"/>
</dbReference>
<dbReference type="Gene3D" id="3.40.50.10860">
    <property type="entry name" value="Leucine Dehydrogenase, chain A, domain 1"/>
    <property type="match status" value="1"/>
</dbReference>
<dbReference type="Gene3D" id="3.40.50.720">
    <property type="entry name" value="NAD(P)-binding Rossmann-like Domain"/>
    <property type="match status" value="1"/>
</dbReference>
<dbReference type="Gene3D" id="3.40.50.300">
    <property type="entry name" value="P-loop containing nucleotide triphosphate hydrolases"/>
    <property type="match status" value="2"/>
</dbReference>
<dbReference type="HAMAP" id="MF_01543">
    <property type="entry name" value="FTHFS"/>
    <property type="match status" value="1"/>
</dbReference>
<dbReference type="HAMAP" id="MF_01576">
    <property type="entry name" value="THF_DHG_CYH"/>
    <property type="match status" value="1"/>
</dbReference>
<dbReference type="InterPro" id="IPR046346">
    <property type="entry name" value="Aminoacid_DH-like_N_sf"/>
</dbReference>
<dbReference type="InterPro" id="IPR000559">
    <property type="entry name" value="Formate_THF_ligase"/>
</dbReference>
<dbReference type="InterPro" id="IPR020628">
    <property type="entry name" value="Formate_THF_ligase_CS"/>
</dbReference>
<dbReference type="InterPro" id="IPR036291">
    <property type="entry name" value="NAD(P)-bd_dom_sf"/>
</dbReference>
<dbReference type="InterPro" id="IPR027417">
    <property type="entry name" value="P-loop_NTPase"/>
</dbReference>
<dbReference type="InterPro" id="IPR000672">
    <property type="entry name" value="THF_DH/CycHdrlase"/>
</dbReference>
<dbReference type="InterPro" id="IPR020630">
    <property type="entry name" value="THF_DH/CycHdrlase_cat_dom"/>
</dbReference>
<dbReference type="InterPro" id="IPR020867">
    <property type="entry name" value="THF_DH/CycHdrlase_CS"/>
</dbReference>
<dbReference type="InterPro" id="IPR020631">
    <property type="entry name" value="THF_DH/CycHdrlase_NAD-bd_dom"/>
</dbReference>
<dbReference type="PANTHER" id="PTHR48099:SF5">
    <property type="entry name" value="C-1-TETRAHYDROFOLATE SYNTHASE, CYTOPLASMIC"/>
    <property type="match status" value="1"/>
</dbReference>
<dbReference type="PANTHER" id="PTHR48099">
    <property type="entry name" value="C-1-TETRAHYDROFOLATE SYNTHASE, CYTOPLASMIC-RELATED"/>
    <property type="match status" value="1"/>
</dbReference>
<dbReference type="Pfam" id="PF01268">
    <property type="entry name" value="FTHFS"/>
    <property type="match status" value="1"/>
</dbReference>
<dbReference type="Pfam" id="PF00763">
    <property type="entry name" value="THF_DHG_CYH"/>
    <property type="match status" value="1"/>
</dbReference>
<dbReference type="Pfam" id="PF02882">
    <property type="entry name" value="THF_DHG_CYH_C"/>
    <property type="match status" value="1"/>
</dbReference>
<dbReference type="PRINTS" id="PR00085">
    <property type="entry name" value="THFDHDRGNASE"/>
</dbReference>
<dbReference type="SUPFAM" id="SSF53223">
    <property type="entry name" value="Aminoacid dehydrogenase-like, N-terminal domain"/>
    <property type="match status" value="1"/>
</dbReference>
<dbReference type="SUPFAM" id="SSF51735">
    <property type="entry name" value="NAD(P)-binding Rossmann-fold domains"/>
    <property type="match status" value="1"/>
</dbReference>
<dbReference type="SUPFAM" id="SSF52540">
    <property type="entry name" value="P-loop containing nucleoside triphosphate hydrolases"/>
    <property type="match status" value="1"/>
</dbReference>
<dbReference type="PROSITE" id="PS00721">
    <property type="entry name" value="FTHFS_1"/>
    <property type="match status" value="1"/>
</dbReference>
<dbReference type="PROSITE" id="PS00767">
    <property type="entry name" value="THF_DHG_CYH_2"/>
    <property type="match status" value="1"/>
</dbReference>
<keyword id="KW-0067">ATP-binding</keyword>
<keyword id="KW-0378">Hydrolase</keyword>
<keyword id="KW-0436">Ligase</keyword>
<keyword id="KW-0496">Mitochondrion</keyword>
<keyword id="KW-0511">Multifunctional enzyme</keyword>
<keyword id="KW-0521">NADP</keyword>
<keyword id="KW-0547">Nucleotide-binding</keyword>
<keyword id="KW-0554">One-carbon metabolism</keyword>
<keyword id="KW-0560">Oxidoreductase</keyword>
<keyword id="KW-1185">Reference proteome</keyword>
<keyword id="KW-0809">Transit peptide</keyword>
<gene>
    <name type="primary">ade9</name>
    <name type="ORF">SPBC2G2.08</name>
</gene>
<reference key="1">
    <citation type="journal article" date="2002" name="Nature">
        <title>The genome sequence of Schizosaccharomyces pombe.</title>
        <authorList>
            <person name="Wood V."/>
            <person name="Gwilliam R."/>
            <person name="Rajandream M.A."/>
            <person name="Lyne M.H."/>
            <person name="Lyne R."/>
            <person name="Stewart A."/>
            <person name="Sgouros J.G."/>
            <person name="Peat N."/>
            <person name="Hayles J."/>
            <person name="Baker S.G."/>
            <person name="Basham D."/>
            <person name="Bowman S."/>
            <person name="Brooks K."/>
            <person name="Brown D."/>
            <person name="Brown S."/>
            <person name="Chillingworth T."/>
            <person name="Churcher C.M."/>
            <person name="Collins M."/>
            <person name="Connor R."/>
            <person name="Cronin A."/>
            <person name="Davis P."/>
            <person name="Feltwell T."/>
            <person name="Fraser A."/>
            <person name="Gentles S."/>
            <person name="Goble A."/>
            <person name="Hamlin N."/>
            <person name="Harris D.E."/>
            <person name="Hidalgo J."/>
            <person name="Hodgson G."/>
            <person name="Holroyd S."/>
            <person name="Hornsby T."/>
            <person name="Howarth S."/>
            <person name="Huckle E.J."/>
            <person name="Hunt S."/>
            <person name="Jagels K."/>
            <person name="James K.D."/>
            <person name="Jones L."/>
            <person name="Jones M."/>
            <person name="Leather S."/>
            <person name="McDonald S."/>
            <person name="McLean J."/>
            <person name="Mooney P."/>
            <person name="Moule S."/>
            <person name="Mungall K.L."/>
            <person name="Murphy L.D."/>
            <person name="Niblett D."/>
            <person name="Odell C."/>
            <person name="Oliver K."/>
            <person name="O'Neil S."/>
            <person name="Pearson D."/>
            <person name="Quail M.A."/>
            <person name="Rabbinowitsch E."/>
            <person name="Rutherford K.M."/>
            <person name="Rutter S."/>
            <person name="Saunders D."/>
            <person name="Seeger K."/>
            <person name="Sharp S."/>
            <person name="Skelton J."/>
            <person name="Simmonds M.N."/>
            <person name="Squares R."/>
            <person name="Squares S."/>
            <person name="Stevens K."/>
            <person name="Taylor K."/>
            <person name="Taylor R.G."/>
            <person name="Tivey A."/>
            <person name="Walsh S.V."/>
            <person name="Warren T."/>
            <person name="Whitehead S."/>
            <person name="Woodward J.R."/>
            <person name="Volckaert G."/>
            <person name="Aert R."/>
            <person name="Robben J."/>
            <person name="Grymonprez B."/>
            <person name="Weltjens I."/>
            <person name="Vanstreels E."/>
            <person name="Rieger M."/>
            <person name="Schaefer M."/>
            <person name="Mueller-Auer S."/>
            <person name="Gabel C."/>
            <person name="Fuchs M."/>
            <person name="Duesterhoeft A."/>
            <person name="Fritzc C."/>
            <person name="Holzer E."/>
            <person name="Moestl D."/>
            <person name="Hilbert H."/>
            <person name="Borzym K."/>
            <person name="Langer I."/>
            <person name="Beck A."/>
            <person name="Lehrach H."/>
            <person name="Reinhardt R."/>
            <person name="Pohl T.M."/>
            <person name="Eger P."/>
            <person name="Zimmermann W."/>
            <person name="Wedler H."/>
            <person name="Wambutt R."/>
            <person name="Purnelle B."/>
            <person name="Goffeau A."/>
            <person name="Cadieu E."/>
            <person name="Dreano S."/>
            <person name="Gloux S."/>
            <person name="Lelaure V."/>
            <person name="Mottier S."/>
            <person name="Galibert F."/>
            <person name="Aves S.J."/>
            <person name="Xiang Z."/>
            <person name="Hunt C."/>
            <person name="Moore K."/>
            <person name="Hurst S.M."/>
            <person name="Lucas M."/>
            <person name="Rochet M."/>
            <person name="Gaillardin C."/>
            <person name="Tallada V.A."/>
            <person name="Garzon A."/>
            <person name="Thode G."/>
            <person name="Daga R.R."/>
            <person name="Cruzado L."/>
            <person name="Jimenez J."/>
            <person name="Sanchez M."/>
            <person name="del Rey F."/>
            <person name="Benito J."/>
            <person name="Dominguez A."/>
            <person name="Revuelta J.L."/>
            <person name="Moreno S."/>
            <person name="Armstrong J."/>
            <person name="Forsburg S.L."/>
            <person name="Cerutti L."/>
            <person name="Lowe T."/>
            <person name="McCombie W.R."/>
            <person name="Paulsen I."/>
            <person name="Potashkin J."/>
            <person name="Shpakovski G.V."/>
            <person name="Ussery D."/>
            <person name="Barrell B.G."/>
            <person name="Nurse P."/>
        </authorList>
    </citation>
    <scope>NUCLEOTIDE SEQUENCE [LARGE SCALE GENOMIC DNA]</scope>
    <source>
        <strain>972 / ATCC 24843</strain>
    </source>
</reference>
<reference key="2">
    <citation type="journal article" date="2011" name="Science">
        <title>Comparative functional genomics of the fission yeasts.</title>
        <authorList>
            <person name="Rhind N."/>
            <person name="Chen Z."/>
            <person name="Yassour M."/>
            <person name="Thompson D.A."/>
            <person name="Haas B.J."/>
            <person name="Habib N."/>
            <person name="Wapinski I."/>
            <person name="Roy S."/>
            <person name="Lin M.F."/>
            <person name="Heiman D.I."/>
            <person name="Young S.K."/>
            <person name="Furuya K."/>
            <person name="Guo Y."/>
            <person name="Pidoux A."/>
            <person name="Chen H.M."/>
            <person name="Robbertse B."/>
            <person name="Goldberg J.M."/>
            <person name="Aoki K."/>
            <person name="Bayne E.H."/>
            <person name="Berlin A.M."/>
            <person name="Desjardins C.A."/>
            <person name="Dobbs E."/>
            <person name="Dukaj L."/>
            <person name="Fan L."/>
            <person name="FitzGerald M.G."/>
            <person name="French C."/>
            <person name="Gujja S."/>
            <person name="Hansen K."/>
            <person name="Keifenheim D."/>
            <person name="Levin J.Z."/>
            <person name="Mosher R.A."/>
            <person name="Mueller C.A."/>
            <person name="Pfiffner J."/>
            <person name="Priest M."/>
            <person name="Russ C."/>
            <person name="Smialowska A."/>
            <person name="Swoboda P."/>
            <person name="Sykes S.M."/>
            <person name="Vaughn M."/>
            <person name="Vengrova S."/>
            <person name="Yoder R."/>
            <person name="Zeng Q."/>
            <person name="Allshire R."/>
            <person name="Baulcombe D."/>
            <person name="Birren B.W."/>
            <person name="Brown W."/>
            <person name="Ekwall K."/>
            <person name="Kellis M."/>
            <person name="Leatherwood J."/>
            <person name="Levin H."/>
            <person name="Margalit H."/>
            <person name="Martienssen R."/>
            <person name="Nieduszynski C.A."/>
            <person name="Spatafora J.W."/>
            <person name="Friedman N."/>
            <person name="Dalgaard J.Z."/>
            <person name="Baumann P."/>
            <person name="Niki H."/>
            <person name="Regev A."/>
            <person name="Nusbaum C."/>
        </authorList>
    </citation>
    <scope>REVISION OF GENE MODEL</scope>
</reference>
<reference key="3">
    <citation type="journal article" date="2006" name="Nat. Biotechnol.">
        <title>ORFeome cloning and global analysis of protein localization in the fission yeast Schizosaccharomyces pombe.</title>
        <authorList>
            <person name="Matsuyama A."/>
            <person name="Arai R."/>
            <person name="Yashiroda Y."/>
            <person name="Shirai A."/>
            <person name="Kamata A."/>
            <person name="Sekido S."/>
            <person name="Kobayashi Y."/>
            <person name="Hashimoto A."/>
            <person name="Hamamoto M."/>
            <person name="Hiraoka Y."/>
            <person name="Horinouchi S."/>
            <person name="Yoshida M."/>
        </authorList>
    </citation>
    <scope>SUBCELLULAR LOCATION [LARGE SCALE ANALYSIS]</scope>
</reference>
<sequence length="972" mass="105757">MNVMVSFNQLRNYFLESNSLRPSKWLFQSYGTSSSANILNGKLLARKLQRSVAEEVQALKAKDRNFKPALAIVQVGKREDSNVYVRMKEKAARLVGIDFKYCPFPETIQMPALLHELKKLNDDHTVHGVLVQLPLPKHLNERTVTESITPPKDVDGFGAFNIGLLAKNDATPIHYPCTPKGIMELLKDNKISVAGLNAVVLGRSDIVGNPISYLLRKDNATVTVCHSKTKDLIQHISNADLVIAALGKPEFVRGEWLKPGSVVVDVGINAVQRNGKRVLVGDVHFESASKVASSITPVPGGVGPMTVAMLMENIVNAAKIARTENIYRKIDLNPLELKKPVPSDIEIANSQEPKLISNLAKEMGIYDTELENYGNYKAKVNLAVYERLKHRKDGNYVVVSGITPTPFGEGKSTVVAGLVQAMGHLGKLGIACVRQPSQGPTFGVKGGAAGGGYAQFIPMDDFNLHMTGDIHAVTAANNLLVAALETRMFHENTQSDAALIKRLIPVKNGRRVIPRGLIGRWNRICASHNMDPEDVNNASPELLKEFVRLNVDPDTIECNRVLDVNDRFLRSIEVGKASTEKGHVRKTSFDISVASECMSILALSCDLNDMHSRLSRMVIANDKYGNAITAGDLGVSGALTVLLKDAIKPNLMQTLEGTPAFVHAGPFANISIGASSIIADKIALKLAGTESFDRPEDAGYVVTEAGFASDMGMEKFFNIKCRYSKLVPNTVVLVTTVKALKLHGGGPKLKPGAPIPEEYLVENLDLVKNGCSNMVKHIQNCHKFNIPVVVAINSYKTDSSKEHEIIREAALQAGAVDAVPSDHWAQGGKGAIELAKSVMTACDQSSNSKFRLLYDSETSIEDKVNVIAKEMYGANGVEFSSLAKERINTFIKQGFGNLPICMAKTQYSLSHNPEFRNVPKNFTVPIRDMRLNAGAGFIYPLAAEIQTIPGLPTAPAYLNIDICENGEIVGLS</sequence>
<name>C1TM_SCHPO</name>
<feature type="transit peptide" description="Mitochondrion" evidence="3">
    <location>
        <begin position="1"/>
        <end position="55"/>
    </location>
</feature>
<feature type="chain" id="PRO_0000315627" description="C-1-tetrahydrofolate synthase, mitochondrial">
    <location>
        <begin position="56"/>
        <end position="972"/>
    </location>
</feature>
<feature type="region of interest" description="Methylenetetrahydrofolate dehydrogenase and cyclohydrolase">
    <location>
        <begin position="56"/>
        <end position="340"/>
    </location>
</feature>
<feature type="region of interest" description="Formyltetrahydrofolate synthetase">
    <location>
        <begin position="341"/>
        <end position="972"/>
    </location>
</feature>
<feature type="binding site" evidence="2">
    <location>
        <begin position="84"/>
        <end position="88"/>
    </location>
    <ligand>
        <name>substrate</name>
    </ligand>
</feature>
<feature type="binding site" evidence="2">
    <location>
        <begin position="131"/>
        <end position="133"/>
    </location>
    <ligand>
        <name>substrate</name>
    </ligand>
</feature>
<feature type="binding site" evidence="2">
    <location>
        <begin position="202"/>
        <end position="204"/>
    </location>
    <ligand>
        <name>NADP(+)</name>
        <dbReference type="ChEBI" id="CHEBI:58349"/>
    </ligand>
</feature>
<feature type="binding site" evidence="2">
    <location>
        <position position="227"/>
    </location>
    <ligand>
        <name>NADP(+)</name>
        <dbReference type="ChEBI" id="CHEBI:58349"/>
    </ligand>
</feature>
<feature type="binding site" evidence="2">
    <location>
        <begin position="299"/>
        <end position="303"/>
    </location>
    <ligand>
        <name>substrate</name>
    </ligand>
</feature>
<feature type="binding site">
    <location>
        <begin position="405"/>
        <end position="412"/>
    </location>
    <ligand>
        <name>ATP</name>
        <dbReference type="ChEBI" id="CHEBI:30616"/>
    </ligand>
</feature>
<accession>O43007</accession>
<comment type="function">
    <text evidence="1">Mitochondrial isozyme of C-1-tetrahydrofolate synthase. The trifunctional enzyme catalyzes the interconversion of the one-carbon derivatives of tetrahydrofolate (THF) between different oxidation states by the enzymatic activities 10-formyltetrahydrofolate synthetase, 5,lO-methenyltetrahydrofolate cyclohydrolase, and 5,lO-methylenetetrahydrofolate dehydrogenase.</text>
</comment>
<comment type="catalytic activity">
    <reaction evidence="1">
        <text>(6R)-5,10-methylene-5,6,7,8-tetrahydrofolate + NADP(+) = (6R)-5,10-methenyltetrahydrofolate + NADPH</text>
        <dbReference type="Rhea" id="RHEA:22812"/>
        <dbReference type="ChEBI" id="CHEBI:15636"/>
        <dbReference type="ChEBI" id="CHEBI:57455"/>
        <dbReference type="ChEBI" id="CHEBI:57783"/>
        <dbReference type="ChEBI" id="CHEBI:58349"/>
        <dbReference type="EC" id="1.5.1.5"/>
    </reaction>
</comment>
<comment type="catalytic activity">
    <reaction evidence="1">
        <text>(6R)-5,10-methenyltetrahydrofolate + H2O = (6R)-10-formyltetrahydrofolate + H(+)</text>
        <dbReference type="Rhea" id="RHEA:23700"/>
        <dbReference type="ChEBI" id="CHEBI:15377"/>
        <dbReference type="ChEBI" id="CHEBI:15378"/>
        <dbReference type="ChEBI" id="CHEBI:57455"/>
        <dbReference type="ChEBI" id="CHEBI:195366"/>
        <dbReference type="EC" id="3.5.4.9"/>
    </reaction>
</comment>
<comment type="catalytic activity">
    <reaction evidence="1">
        <text>(6S)-5,6,7,8-tetrahydrofolate + formate + ATP = (6R)-10-formyltetrahydrofolate + ADP + phosphate</text>
        <dbReference type="Rhea" id="RHEA:20221"/>
        <dbReference type="ChEBI" id="CHEBI:15740"/>
        <dbReference type="ChEBI" id="CHEBI:30616"/>
        <dbReference type="ChEBI" id="CHEBI:43474"/>
        <dbReference type="ChEBI" id="CHEBI:57453"/>
        <dbReference type="ChEBI" id="CHEBI:195366"/>
        <dbReference type="ChEBI" id="CHEBI:456216"/>
        <dbReference type="EC" id="6.3.4.3"/>
    </reaction>
</comment>
<comment type="pathway">
    <text>One-carbon metabolism; tetrahydrofolate interconversion.</text>
</comment>
<comment type="subunit">
    <text evidence="1">Homodimer.</text>
</comment>
<comment type="subcellular location">
    <subcellularLocation>
        <location evidence="4">Mitochondrion</location>
    </subcellularLocation>
</comment>
<comment type="domain">
    <text>This trifunctional enzyme consists of two major domains: an N-terminal part containing the methylene-THF dehydrogenase and cyclohydrolase activities and a larger C-terminal part containing formyl-THF synthetase activity.</text>
</comment>
<comment type="similarity">
    <text evidence="5">In the N-terminal section; belongs to the tetrahydrofolate dehydrogenase/cyclohydrolase family.</text>
</comment>
<comment type="similarity">
    <text evidence="5">In the C-terminal section; belongs to the formate--tetrahydrofolate ligase family.</text>
</comment>
<organism>
    <name type="scientific">Schizosaccharomyces pombe (strain 972 / ATCC 24843)</name>
    <name type="common">Fission yeast</name>
    <dbReference type="NCBI Taxonomy" id="284812"/>
    <lineage>
        <taxon>Eukaryota</taxon>
        <taxon>Fungi</taxon>
        <taxon>Dikarya</taxon>
        <taxon>Ascomycota</taxon>
        <taxon>Taphrinomycotina</taxon>
        <taxon>Schizosaccharomycetes</taxon>
        <taxon>Schizosaccharomycetales</taxon>
        <taxon>Schizosaccharomycetaceae</taxon>
        <taxon>Schizosaccharomyces</taxon>
    </lineage>
</organism>
<proteinExistence type="inferred from homology"/>
<protein>
    <recommendedName>
        <fullName>C-1-tetrahydrofolate synthase, mitochondrial</fullName>
        <shortName>C1-THF synthase</shortName>
    </recommendedName>
    <domain>
        <recommendedName>
            <fullName>Methylenetetrahydrofolate dehydrogenase</fullName>
            <ecNumber>1.5.1.5</ecNumber>
        </recommendedName>
    </domain>
    <domain>
        <recommendedName>
            <fullName>Methenyltetrahydrofolate cyclohydrolase</fullName>
            <ecNumber>3.5.4.9</ecNumber>
        </recommendedName>
    </domain>
    <domain>
        <recommendedName>
            <fullName>Formyltetrahydrofolate synthetase</fullName>
            <ecNumber>6.3.4.3</ecNumber>
        </recommendedName>
    </domain>
</protein>